<comment type="catalytic activity">
    <reaction evidence="1">
        <text>(6R)-10-formyltetrahydrofolate + 5-amino-1-(5-phospho-beta-D-ribosyl)imidazole-4-carboxamide = 5-formamido-1-(5-phospho-D-ribosyl)imidazole-4-carboxamide + (6S)-5,6,7,8-tetrahydrofolate</text>
        <dbReference type="Rhea" id="RHEA:22192"/>
        <dbReference type="ChEBI" id="CHEBI:57453"/>
        <dbReference type="ChEBI" id="CHEBI:58467"/>
        <dbReference type="ChEBI" id="CHEBI:58475"/>
        <dbReference type="ChEBI" id="CHEBI:195366"/>
        <dbReference type="EC" id="2.1.2.3"/>
    </reaction>
</comment>
<comment type="catalytic activity">
    <reaction evidence="1">
        <text>IMP + H2O = 5-formamido-1-(5-phospho-D-ribosyl)imidazole-4-carboxamide</text>
        <dbReference type="Rhea" id="RHEA:18445"/>
        <dbReference type="ChEBI" id="CHEBI:15377"/>
        <dbReference type="ChEBI" id="CHEBI:58053"/>
        <dbReference type="ChEBI" id="CHEBI:58467"/>
        <dbReference type="EC" id="3.5.4.10"/>
    </reaction>
</comment>
<comment type="pathway">
    <text evidence="1">Purine metabolism; IMP biosynthesis via de novo pathway; 5-formamido-1-(5-phospho-D-ribosyl)imidazole-4-carboxamide from 5-amino-1-(5-phospho-D-ribosyl)imidazole-4-carboxamide (10-formyl THF route): step 1/1.</text>
</comment>
<comment type="pathway">
    <text evidence="1">Purine metabolism; IMP biosynthesis via de novo pathway; IMP from 5-formamido-1-(5-phospho-D-ribosyl)imidazole-4-carboxamide: step 1/1.</text>
</comment>
<comment type="domain">
    <text evidence="1">The IMP cyclohydrolase activity resides in the N-terminal region.</text>
</comment>
<comment type="similarity">
    <text evidence="1">Belongs to the PurH family.</text>
</comment>
<dbReference type="EC" id="2.1.2.3" evidence="1"/>
<dbReference type="EC" id="3.5.4.10" evidence="1"/>
<dbReference type="EMBL" id="AE016853">
    <property type="protein sequence ID" value="AAO58295.1"/>
    <property type="molecule type" value="Genomic_DNA"/>
</dbReference>
<dbReference type="RefSeq" id="NP_794600.1">
    <property type="nucleotide sequence ID" value="NC_004578.1"/>
</dbReference>
<dbReference type="RefSeq" id="WP_011105209.1">
    <property type="nucleotide sequence ID" value="NC_004578.1"/>
</dbReference>
<dbReference type="SMR" id="Q87VR9"/>
<dbReference type="STRING" id="223283.PSPTO_4866"/>
<dbReference type="GeneID" id="1186549"/>
<dbReference type="KEGG" id="pst:PSPTO_4866"/>
<dbReference type="PATRIC" id="fig|223283.9.peg.4978"/>
<dbReference type="eggNOG" id="COG0138">
    <property type="taxonomic scope" value="Bacteria"/>
</dbReference>
<dbReference type="HOGENOM" id="CLU_016316_5_2_6"/>
<dbReference type="OrthoDB" id="9802065at2"/>
<dbReference type="PhylomeDB" id="Q87VR9"/>
<dbReference type="UniPathway" id="UPA00074">
    <property type="reaction ID" value="UER00133"/>
</dbReference>
<dbReference type="UniPathway" id="UPA00074">
    <property type="reaction ID" value="UER00135"/>
</dbReference>
<dbReference type="Proteomes" id="UP000002515">
    <property type="component" value="Chromosome"/>
</dbReference>
<dbReference type="GO" id="GO:0005829">
    <property type="term" value="C:cytosol"/>
    <property type="evidence" value="ECO:0007669"/>
    <property type="project" value="TreeGrafter"/>
</dbReference>
<dbReference type="GO" id="GO:0003937">
    <property type="term" value="F:IMP cyclohydrolase activity"/>
    <property type="evidence" value="ECO:0007669"/>
    <property type="project" value="UniProtKB-UniRule"/>
</dbReference>
<dbReference type="GO" id="GO:0004643">
    <property type="term" value="F:phosphoribosylaminoimidazolecarboxamide formyltransferase activity"/>
    <property type="evidence" value="ECO:0007669"/>
    <property type="project" value="UniProtKB-UniRule"/>
</dbReference>
<dbReference type="GO" id="GO:0006189">
    <property type="term" value="P:'de novo' IMP biosynthetic process"/>
    <property type="evidence" value="ECO:0007669"/>
    <property type="project" value="UniProtKB-UniRule"/>
</dbReference>
<dbReference type="CDD" id="cd01421">
    <property type="entry name" value="IMPCH"/>
    <property type="match status" value="1"/>
</dbReference>
<dbReference type="FunFam" id="3.40.140.20:FF:000001">
    <property type="entry name" value="Bifunctional purine biosynthesis protein PurH"/>
    <property type="match status" value="1"/>
</dbReference>
<dbReference type="FunFam" id="3.40.140.20:FF:000002">
    <property type="entry name" value="Bifunctional purine biosynthesis protein PurH"/>
    <property type="match status" value="1"/>
</dbReference>
<dbReference type="FunFam" id="3.40.50.1380:FF:000001">
    <property type="entry name" value="Bifunctional purine biosynthesis protein PurH"/>
    <property type="match status" value="1"/>
</dbReference>
<dbReference type="Gene3D" id="3.40.140.20">
    <property type="match status" value="2"/>
</dbReference>
<dbReference type="Gene3D" id="3.40.50.1380">
    <property type="entry name" value="Methylglyoxal synthase-like domain"/>
    <property type="match status" value="1"/>
</dbReference>
<dbReference type="HAMAP" id="MF_00139">
    <property type="entry name" value="PurH"/>
    <property type="match status" value="1"/>
</dbReference>
<dbReference type="InterPro" id="IPR024051">
    <property type="entry name" value="AICAR_Tfase_dup_dom_sf"/>
</dbReference>
<dbReference type="InterPro" id="IPR016193">
    <property type="entry name" value="Cytidine_deaminase-like"/>
</dbReference>
<dbReference type="InterPro" id="IPR011607">
    <property type="entry name" value="MGS-like_dom"/>
</dbReference>
<dbReference type="InterPro" id="IPR036914">
    <property type="entry name" value="MGS-like_dom_sf"/>
</dbReference>
<dbReference type="InterPro" id="IPR002695">
    <property type="entry name" value="PurH-like"/>
</dbReference>
<dbReference type="NCBIfam" id="NF002049">
    <property type="entry name" value="PRK00881.1"/>
    <property type="match status" value="1"/>
</dbReference>
<dbReference type="NCBIfam" id="TIGR00355">
    <property type="entry name" value="purH"/>
    <property type="match status" value="1"/>
</dbReference>
<dbReference type="PANTHER" id="PTHR11692:SF0">
    <property type="entry name" value="BIFUNCTIONAL PURINE BIOSYNTHESIS PROTEIN ATIC"/>
    <property type="match status" value="1"/>
</dbReference>
<dbReference type="PANTHER" id="PTHR11692">
    <property type="entry name" value="BIFUNCTIONAL PURINE BIOSYNTHESIS PROTEIN PURH"/>
    <property type="match status" value="1"/>
</dbReference>
<dbReference type="Pfam" id="PF01808">
    <property type="entry name" value="AICARFT_IMPCHas"/>
    <property type="match status" value="1"/>
</dbReference>
<dbReference type="Pfam" id="PF02142">
    <property type="entry name" value="MGS"/>
    <property type="match status" value="1"/>
</dbReference>
<dbReference type="PIRSF" id="PIRSF000414">
    <property type="entry name" value="AICARFT_IMPCHas"/>
    <property type="match status" value="1"/>
</dbReference>
<dbReference type="SMART" id="SM00798">
    <property type="entry name" value="AICARFT_IMPCHas"/>
    <property type="match status" value="1"/>
</dbReference>
<dbReference type="SMART" id="SM00851">
    <property type="entry name" value="MGS"/>
    <property type="match status" value="1"/>
</dbReference>
<dbReference type="SUPFAM" id="SSF53927">
    <property type="entry name" value="Cytidine deaminase-like"/>
    <property type="match status" value="1"/>
</dbReference>
<dbReference type="SUPFAM" id="SSF52335">
    <property type="entry name" value="Methylglyoxal synthase-like"/>
    <property type="match status" value="1"/>
</dbReference>
<dbReference type="PROSITE" id="PS51855">
    <property type="entry name" value="MGS"/>
    <property type="match status" value="1"/>
</dbReference>
<sequence length="534" mass="57463">MTDQTTRLPIRRALISVSDKTGILEFARELEALGVEILSTGGTFKLLQDNGVAAVEVADYTGFAEMMDGRVKTLHPKIHGGILGRRGIDDAIMNEHGIKPIDLVAVNLYPFEATVSKPGCDLPTAIENIDIGGPTMVRSAAKNHKDVAIVVNAGDYGQVLESLKAGGLTYAQRFDLMLKAFEHTAAYDGMIANYLGGVDQTADTLSTEGRSQFPRTFNTQFVKAQEMRYGENPHQSAAFYVEAKPAEVGIATATQLQGKELSFNNVADTDAALECVKSFVKPACVIVKHANPCGVAVCPDDEGGIRQAYELAYATDSESAFGGIIAFNRELDAATAKAIVERQFVEVIIAPSVSAEARSIIASKANVRLLTSGQWSERLPAWDYKRVNGGLLVQSRDIGMITEADLKVVTQRAPTEHEMHDLIFAWKVAKYVKSNAIVYARNRQTIGVGAGQMSRVNSARIAAIKAEHAGLQVQGAVMASDAFFPFRDGIDNAAKVGISAVIQPGGSMRDNEVIAAADEAGIAMVFTGMRHFRH</sequence>
<reference key="1">
    <citation type="journal article" date="2003" name="Proc. Natl. Acad. Sci. U.S.A.">
        <title>The complete genome sequence of the Arabidopsis and tomato pathogen Pseudomonas syringae pv. tomato DC3000.</title>
        <authorList>
            <person name="Buell C.R."/>
            <person name="Joardar V."/>
            <person name="Lindeberg M."/>
            <person name="Selengut J."/>
            <person name="Paulsen I.T."/>
            <person name="Gwinn M.L."/>
            <person name="Dodson R.J."/>
            <person name="DeBoy R.T."/>
            <person name="Durkin A.S."/>
            <person name="Kolonay J.F."/>
            <person name="Madupu R."/>
            <person name="Daugherty S.C."/>
            <person name="Brinkac L.M."/>
            <person name="Beanan M.J."/>
            <person name="Haft D.H."/>
            <person name="Nelson W.C."/>
            <person name="Davidsen T.M."/>
            <person name="Zafar N."/>
            <person name="Zhou L."/>
            <person name="Liu J."/>
            <person name="Yuan Q."/>
            <person name="Khouri H.M."/>
            <person name="Fedorova N.B."/>
            <person name="Tran B."/>
            <person name="Russell D."/>
            <person name="Berry K.J."/>
            <person name="Utterback T.R."/>
            <person name="Van Aken S.E."/>
            <person name="Feldblyum T.V."/>
            <person name="D'Ascenzo M."/>
            <person name="Deng W.-L."/>
            <person name="Ramos A.R."/>
            <person name="Alfano J.R."/>
            <person name="Cartinhour S."/>
            <person name="Chatterjee A.K."/>
            <person name="Delaney T.P."/>
            <person name="Lazarowitz S.G."/>
            <person name="Martin G.B."/>
            <person name="Schneider D.J."/>
            <person name="Tang X."/>
            <person name="Bender C.L."/>
            <person name="White O."/>
            <person name="Fraser C.M."/>
            <person name="Collmer A."/>
        </authorList>
    </citation>
    <scope>NUCLEOTIDE SEQUENCE [LARGE SCALE GENOMIC DNA]</scope>
    <source>
        <strain>ATCC BAA-871 / DC3000</strain>
    </source>
</reference>
<name>PUR9_PSESM</name>
<accession>Q87VR9</accession>
<organism>
    <name type="scientific">Pseudomonas syringae pv. tomato (strain ATCC BAA-871 / DC3000)</name>
    <dbReference type="NCBI Taxonomy" id="223283"/>
    <lineage>
        <taxon>Bacteria</taxon>
        <taxon>Pseudomonadati</taxon>
        <taxon>Pseudomonadota</taxon>
        <taxon>Gammaproteobacteria</taxon>
        <taxon>Pseudomonadales</taxon>
        <taxon>Pseudomonadaceae</taxon>
        <taxon>Pseudomonas</taxon>
    </lineage>
</organism>
<feature type="chain" id="PRO_0000192114" description="Bifunctional purine biosynthesis protein PurH">
    <location>
        <begin position="1"/>
        <end position="534"/>
    </location>
</feature>
<feature type="domain" description="MGS-like" evidence="2">
    <location>
        <begin position="6"/>
        <end position="151"/>
    </location>
</feature>
<keyword id="KW-0378">Hydrolase</keyword>
<keyword id="KW-0511">Multifunctional enzyme</keyword>
<keyword id="KW-0658">Purine biosynthesis</keyword>
<keyword id="KW-1185">Reference proteome</keyword>
<keyword id="KW-0808">Transferase</keyword>
<gene>
    <name evidence="1" type="primary">purH</name>
    <name type="ordered locus">PSPTO_4866</name>
</gene>
<evidence type="ECO:0000255" key="1">
    <source>
        <dbReference type="HAMAP-Rule" id="MF_00139"/>
    </source>
</evidence>
<evidence type="ECO:0000255" key="2">
    <source>
        <dbReference type="PROSITE-ProRule" id="PRU01202"/>
    </source>
</evidence>
<proteinExistence type="inferred from homology"/>
<protein>
    <recommendedName>
        <fullName evidence="1">Bifunctional purine biosynthesis protein PurH</fullName>
    </recommendedName>
    <domain>
        <recommendedName>
            <fullName evidence="1">Phosphoribosylaminoimidazolecarboxamide formyltransferase</fullName>
            <ecNumber evidence="1">2.1.2.3</ecNumber>
        </recommendedName>
        <alternativeName>
            <fullName evidence="1">AICAR transformylase</fullName>
        </alternativeName>
    </domain>
    <domain>
        <recommendedName>
            <fullName evidence="1">IMP cyclohydrolase</fullName>
            <ecNumber evidence="1">3.5.4.10</ecNumber>
        </recommendedName>
        <alternativeName>
            <fullName evidence="1">ATIC</fullName>
        </alternativeName>
        <alternativeName>
            <fullName evidence="1">IMP synthase</fullName>
        </alternativeName>
        <alternativeName>
            <fullName evidence="1">Inosinicase</fullName>
        </alternativeName>
    </domain>
</protein>